<protein>
    <recommendedName>
        <fullName evidence="1">Sec-independent protein translocase protein TatA</fullName>
    </recommendedName>
</protein>
<organism>
    <name type="scientific">Micrococcus luteus (strain ATCC 4698 / DSM 20030 / JCM 1464 / CCM 169 / CCUG 5858 / IAM 1056 / NBRC 3333 / NCIMB 9278 / NCTC 2665 / VKM Ac-2230)</name>
    <name type="common">Micrococcus lysodeikticus</name>
    <dbReference type="NCBI Taxonomy" id="465515"/>
    <lineage>
        <taxon>Bacteria</taxon>
        <taxon>Bacillati</taxon>
        <taxon>Actinomycetota</taxon>
        <taxon>Actinomycetes</taxon>
        <taxon>Micrococcales</taxon>
        <taxon>Micrococcaceae</taxon>
        <taxon>Micrococcus</taxon>
    </lineage>
</organism>
<keyword id="KW-1003">Cell membrane</keyword>
<keyword id="KW-0472">Membrane</keyword>
<keyword id="KW-0653">Protein transport</keyword>
<keyword id="KW-1185">Reference proteome</keyword>
<keyword id="KW-0811">Translocation</keyword>
<keyword id="KW-0812">Transmembrane</keyword>
<keyword id="KW-1133">Transmembrane helix</keyword>
<keyword id="KW-0813">Transport</keyword>
<accession>C5CBV4</accession>
<dbReference type="EMBL" id="CP001628">
    <property type="protein sequence ID" value="ACS30701.1"/>
    <property type="molecule type" value="Genomic_DNA"/>
</dbReference>
<dbReference type="RefSeq" id="WP_010078656.1">
    <property type="nucleotide sequence ID" value="NC_012803.1"/>
</dbReference>
<dbReference type="SMR" id="C5CBV4"/>
<dbReference type="STRING" id="465515.Mlut_11960"/>
<dbReference type="EnsemblBacteria" id="ACS30701">
    <property type="protein sequence ID" value="ACS30701"/>
    <property type="gene ID" value="Mlut_11960"/>
</dbReference>
<dbReference type="GeneID" id="93345353"/>
<dbReference type="KEGG" id="mlu:Mlut_11960"/>
<dbReference type="PATRIC" id="fig|465515.4.peg.1137"/>
<dbReference type="eggNOG" id="COG1826">
    <property type="taxonomic scope" value="Bacteria"/>
</dbReference>
<dbReference type="HOGENOM" id="CLU_086034_4_0_11"/>
<dbReference type="Proteomes" id="UP000000738">
    <property type="component" value="Chromosome"/>
</dbReference>
<dbReference type="GO" id="GO:0033281">
    <property type="term" value="C:TAT protein transport complex"/>
    <property type="evidence" value="ECO:0007669"/>
    <property type="project" value="UniProtKB-UniRule"/>
</dbReference>
<dbReference type="GO" id="GO:0008320">
    <property type="term" value="F:protein transmembrane transporter activity"/>
    <property type="evidence" value="ECO:0007669"/>
    <property type="project" value="UniProtKB-UniRule"/>
</dbReference>
<dbReference type="GO" id="GO:0043953">
    <property type="term" value="P:protein transport by the Tat complex"/>
    <property type="evidence" value="ECO:0007669"/>
    <property type="project" value="UniProtKB-UniRule"/>
</dbReference>
<dbReference type="Gene3D" id="1.20.5.3310">
    <property type="match status" value="1"/>
</dbReference>
<dbReference type="HAMAP" id="MF_00236">
    <property type="entry name" value="TatA_E"/>
    <property type="match status" value="1"/>
</dbReference>
<dbReference type="InterPro" id="IPR003369">
    <property type="entry name" value="TatA/B/E"/>
</dbReference>
<dbReference type="InterPro" id="IPR006312">
    <property type="entry name" value="TatA/E"/>
</dbReference>
<dbReference type="PANTHER" id="PTHR42982">
    <property type="entry name" value="SEC-INDEPENDENT PROTEIN TRANSLOCASE PROTEIN TATA"/>
    <property type="match status" value="1"/>
</dbReference>
<dbReference type="PANTHER" id="PTHR42982:SF8">
    <property type="entry name" value="SEC-INDEPENDENT PROTEIN TRANSLOCASE PROTEIN TATA"/>
    <property type="match status" value="1"/>
</dbReference>
<dbReference type="Pfam" id="PF02416">
    <property type="entry name" value="TatA_B_E"/>
    <property type="match status" value="1"/>
</dbReference>
<comment type="function">
    <text evidence="1">Part of the twin-arginine translocation (Tat) system that transports large folded proteins containing a characteristic twin-arginine motif in their signal peptide across membranes. TatA could form the protein-conducting channel of the Tat system.</text>
</comment>
<comment type="subunit">
    <text evidence="1">The Tat system comprises two distinct complexes: a TatABC complex, containing multiple copies of TatA, TatB and TatC subunits, and a separate TatA complex, containing only TatA subunits. Substrates initially bind to the TatABC complex, which probably triggers association of the separate TatA complex to form the active translocon.</text>
</comment>
<comment type="subcellular location">
    <subcellularLocation>
        <location evidence="1">Cell membrane</location>
        <topology evidence="1">Single-pass membrane protein</topology>
    </subcellularLocation>
</comment>
<comment type="similarity">
    <text evidence="1">Belongs to the TatA/E family.</text>
</comment>
<name>TATA_MICLC</name>
<feature type="chain" id="PRO_1000204439" description="Sec-independent protein translocase protein TatA">
    <location>
        <begin position="1"/>
        <end position="85"/>
    </location>
</feature>
<feature type="transmembrane region" description="Helical" evidence="1">
    <location>
        <begin position="1"/>
        <end position="21"/>
    </location>
</feature>
<feature type="region of interest" description="Disordered" evidence="2">
    <location>
        <begin position="43"/>
        <end position="85"/>
    </location>
</feature>
<feature type="compositionally biased region" description="Basic and acidic residues" evidence="2">
    <location>
        <begin position="44"/>
        <end position="58"/>
    </location>
</feature>
<feature type="compositionally biased region" description="Basic and acidic residues" evidence="2">
    <location>
        <begin position="69"/>
        <end position="85"/>
    </location>
</feature>
<reference key="1">
    <citation type="journal article" date="2010" name="J. Bacteriol.">
        <title>Genome sequence of the Fleming strain of Micrococcus luteus, a simple free-living actinobacterium.</title>
        <authorList>
            <person name="Young M."/>
            <person name="Artsatbanov V."/>
            <person name="Beller H.R."/>
            <person name="Chandra G."/>
            <person name="Chater K.F."/>
            <person name="Dover L.G."/>
            <person name="Goh E.B."/>
            <person name="Kahan T."/>
            <person name="Kaprelyants A.S."/>
            <person name="Kyrpides N."/>
            <person name="Lapidus A."/>
            <person name="Lowry S.R."/>
            <person name="Lykidis A."/>
            <person name="Mahillon J."/>
            <person name="Markowitz V."/>
            <person name="Mavromatis K."/>
            <person name="Mukamolova G.V."/>
            <person name="Oren A."/>
            <person name="Rokem J.S."/>
            <person name="Smith M.C."/>
            <person name="Young D.I."/>
            <person name="Greenblatt C.L."/>
        </authorList>
    </citation>
    <scope>NUCLEOTIDE SEQUENCE [LARGE SCALE GENOMIC DNA]</scope>
    <source>
        <strain>ATCC 4698 / DSM 20030 / JCM 1464 / CCM 169 / CCUG 5858 / IAM 1056 / NBRC 3333 / NCIMB 9278 / NCTC 2665 / VKM Ac-2230</strain>
    </source>
</reference>
<proteinExistence type="inferred from homology"/>
<evidence type="ECO:0000255" key="1">
    <source>
        <dbReference type="HAMAP-Rule" id="MF_00236"/>
    </source>
</evidence>
<evidence type="ECO:0000256" key="2">
    <source>
        <dbReference type="SAM" id="MobiDB-lite"/>
    </source>
</evidence>
<sequence>MAGLQGWQLVIIILLAILLFAAPKLPAMARNLGQSMRIFSSEVKQMRTEGKDAKDERSGTGSTAADEPVEGRVVDRDETDPRDQR</sequence>
<gene>
    <name evidence="1" type="primary">tatA</name>
    <name type="ordered locus">Mlut_11960</name>
</gene>